<proteinExistence type="inferred from homology"/>
<feature type="chain" id="PRO_0000176999" description="Transcription elongation factor GreA">
    <location>
        <begin position="1"/>
        <end position="158"/>
    </location>
</feature>
<feature type="coiled-coil region" evidence="1">
    <location>
        <begin position="45"/>
        <end position="72"/>
    </location>
</feature>
<organism>
    <name type="scientific">Xanthomonas campestris pv. campestris (strain ATCC 33913 / DSM 3586 / NCPPB 528 / LMG 568 / P 25)</name>
    <dbReference type="NCBI Taxonomy" id="190485"/>
    <lineage>
        <taxon>Bacteria</taxon>
        <taxon>Pseudomonadati</taxon>
        <taxon>Pseudomonadota</taxon>
        <taxon>Gammaproteobacteria</taxon>
        <taxon>Lysobacterales</taxon>
        <taxon>Lysobacteraceae</taxon>
        <taxon>Xanthomonas</taxon>
    </lineage>
</organism>
<accession>Q9L4D3</accession>
<sequence>MRAPMTSKGAQRLREELDHLKSVKRPAVITAIAEARAHGDLKENAEYHAAREQQSFIEGRIKQLEGELSHAEIIDITKLAAGTKIVFGATVTLADTETDEEKRYQIVGDLEADIKLGLIAISSPLARALIGKLEGDSVTIDAPAGQREYEVVSVAYLD</sequence>
<comment type="function">
    <text evidence="1">Necessary for efficient RNA polymerase transcription elongation past template-encoded arresting sites. The arresting sites in DNA have the property of trapping a certain fraction of elongating RNA polymerases that pass through, resulting in locked ternary complexes. Cleavage of the nascent transcript by cleavage factors such as GreA or GreB allows the resumption of elongation from the new 3'terminus. GreA releases sequences of 2 to 3 nucleotides.</text>
</comment>
<comment type="similarity">
    <text evidence="1">Belongs to the GreA/GreB family.</text>
</comment>
<name>GREA_XANCP</name>
<protein>
    <recommendedName>
        <fullName evidence="1">Transcription elongation factor GreA</fullName>
    </recommendedName>
    <alternativeName>
        <fullName evidence="1">Transcript cleavage factor GreA</fullName>
    </alternativeName>
</protein>
<dbReference type="EMBL" id="AJ245997">
    <property type="protein sequence ID" value="CAB77041.1"/>
    <property type="molecule type" value="Genomic_DNA"/>
</dbReference>
<dbReference type="EMBL" id="AE008922">
    <property type="protein sequence ID" value="AAM41133.1"/>
    <property type="molecule type" value="Genomic_DNA"/>
</dbReference>
<dbReference type="RefSeq" id="NP_637209.1">
    <property type="nucleotide sequence ID" value="NC_003902.1"/>
</dbReference>
<dbReference type="SMR" id="Q9L4D3"/>
<dbReference type="STRING" id="190485.XCC1844"/>
<dbReference type="EnsemblBacteria" id="AAM41133">
    <property type="protein sequence ID" value="AAM41133"/>
    <property type="gene ID" value="XCC1844"/>
</dbReference>
<dbReference type="KEGG" id="xcc:XCC1844"/>
<dbReference type="PATRIC" id="fig|190485.4.peg.1968"/>
<dbReference type="eggNOG" id="COG0782">
    <property type="taxonomic scope" value="Bacteria"/>
</dbReference>
<dbReference type="HOGENOM" id="CLU_101379_2_0_6"/>
<dbReference type="OrthoDB" id="9808774at2"/>
<dbReference type="Proteomes" id="UP000001010">
    <property type="component" value="Chromosome"/>
</dbReference>
<dbReference type="GO" id="GO:0003677">
    <property type="term" value="F:DNA binding"/>
    <property type="evidence" value="ECO:0007669"/>
    <property type="project" value="UniProtKB-UniRule"/>
</dbReference>
<dbReference type="GO" id="GO:0070063">
    <property type="term" value="F:RNA polymerase binding"/>
    <property type="evidence" value="ECO:0007669"/>
    <property type="project" value="InterPro"/>
</dbReference>
<dbReference type="GO" id="GO:0006354">
    <property type="term" value="P:DNA-templated transcription elongation"/>
    <property type="evidence" value="ECO:0000318"/>
    <property type="project" value="GO_Central"/>
</dbReference>
<dbReference type="GO" id="GO:0032784">
    <property type="term" value="P:regulation of DNA-templated transcription elongation"/>
    <property type="evidence" value="ECO:0007669"/>
    <property type="project" value="UniProtKB-UniRule"/>
</dbReference>
<dbReference type="FunFam" id="1.10.287.180:FF:000001">
    <property type="entry name" value="Transcription elongation factor GreA"/>
    <property type="match status" value="1"/>
</dbReference>
<dbReference type="FunFam" id="3.10.50.30:FF:000001">
    <property type="entry name" value="Transcription elongation factor GreA"/>
    <property type="match status" value="1"/>
</dbReference>
<dbReference type="Gene3D" id="3.10.50.30">
    <property type="entry name" value="Transcription elongation factor, GreA/GreB, C-terminal domain"/>
    <property type="match status" value="1"/>
</dbReference>
<dbReference type="Gene3D" id="1.10.287.180">
    <property type="entry name" value="Transcription elongation factor, GreA/GreB, N-terminal domain"/>
    <property type="match status" value="1"/>
</dbReference>
<dbReference type="HAMAP" id="MF_00105">
    <property type="entry name" value="GreA_GreB"/>
    <property type="match status" value="1"/>
</dbReference>
<dbReference type="InterPro" id="IPR036953">
    <property type="entry name" value="GreA/GreB_C_sf"/>
</dbReference>
<dbReference type="InterPro" id="IPR018151">
    <property type="entry name" value="TF_GreA/GreB_CS"/>
</dbReference>
<dbReference type="InterPro" id="IPR006359">
    <property type="entry name" value="Tscrpt_elong_fac_GreA"/>
</dbReference>
<dbReference type="InterPro" id="IPR028624">
    <property type="entry name" value="Tscrpt_elong_fac_GreA/B"/>
</dbReference>
<dbReference type="InterPro" id="IPR001437">
    <property type="entry name" value="Tscrpt_elong_fac_GreA/B_C"/>
</dbReference>
<dbReference type="InterPro" id="IPR023459">
    <property type="entry name" value="Tscrpt_elong_fac_GreA/B_fam"/>
</dbReference>
<dbReference type="InterPro" id="IPR022691">
    <property type="entry name" value="Tscrpt_elong_fac_GreA/B_N"/>
</dbReference>
<dbReference type="InterPro" id="IPR036805">
    <property type="entry name" value="Tscrpt_elong_fac_GreA/B_N_sf"/>
</dbReference>
<dbReference type="NCBIfam" id="TIGR01462">
    <property type="entry name" value="greA"/>
    <property type="match status" value="1"/>
</dbReference>
<dbReference type="NCBIfam" id="NF001261">
    <property type="entry name" value="PRK00226.1-2"/>
    <property type="match status" value="1"/>
</dbReference>
<dbReference type="NCBIfam" id="NF001263">
    <property type="entry name" value="PRK00226.1-4"/>
    <property type="match status" value="1"/>
</dbReference>
<dbReference type="NCBIfam" id="NF001264">
    <property type="entry name" value="PRK00226.1-5"/>
    <property type="match status" value="1"/>
</dbReference>
<dbReference type="PANTHER" id="PTHR30437">
    <property type="entry name" value="TRANSCRIPTION ELONGATION FACTOR GREA"/>
    <property type="match status" value="1"/>
</dbReference>
<dbReference type="PANTHER" id="PTHR30437:SF4">
    <property type="entry name" value="TRANSCRIPTION ELONGATION FACTOR GREA"/>
    <property type="match status" value="1"/>
</dbReference>
<dbReference type="Pfam" id="PF01272">
    <property type="entry name" value="GreA_GreB"/>
    <property type="match status" value="1"/>
</dbReference>
<dbReference type="Pfam" id="PF03449">
    <property type="entry name" value="GreA_GreB_N"/>
    <property type="match status" value="1"/>
</dbReference>
<dbReference type="PIRSF" id="PIRSF006092">
    <property type="entry name" value="GreA_GreB"/>
    <property type="match status" value="1"/>
</dbReference>
<dbReference type="SUPFAM" id="SSF54534">
    <property type="entry name" value="FKBP-like"/>
    <property type="match status" value="1"/>
</dbReference>
<dbReference type="SUPFAM" id="SSF46557">
    <property type="entry name" value="GreA transcript cleavage protein, N-terminal domain"/>
    <property type="match status" value="1"/>
</dbReference>
<dbReference type="PROSITE" id="PS00829">
    <property type="entry name" value="GREAB_1"/>
    <property type="match status" value="1"/>
</dbReference>
<gene>
    <name evidence="1" type="primary">greA</name>
    <name type="ordered locus">XCC1844</name>
</gene>
<reference key="1">
    <citation type="journal article" date="2000" name="Microbiology">
        <title>Novel genes involved in the regulation of pathogenicity factor production within Xanthomonas campestris.</title>
        <authorList>
            <person name="Dow J.M."/>
            <person name="Feng J.X."/>
            <person name="Barber C.E."/>
            <person name="Tang J.L."/>
            <person name="Daniels M.J."/>
        </authorList>
    </citation>
    <scope>NUCLEOTIDE SEQUENCE [GENOMIC DNA]</scope>
</reference>
<reference key="2">
    <citation type="journal article" date="2002" name="Nature">
        <title>Comparison of the genomes of two Xanthomonas pathogens with differing host specificities.</title>
        <authorList>
            <person name="da Silva A.C.R."/>
            <person name="Ferro J.A."/>
            <person name="Reinach F.C."/>
            <person name="Farah C.S."/>
            <person name="Furlan L.R."/>
            <person name="Quaggio R.B."/>
            <person name="Monteiro-Vitorello C.B."/>
            <person name="Van Sluys M.A."/>
            <person name="Almeida N.F. Jr."/>
            <person name="Alves L.M.C."/>
            <person name="do Amaral A.M."/>
            <person name="Bertolini M.C."/>
            <person name="Camargo L.E.A."/>
            <person name="Camarotte G."/>
            <person name="Cannavan F."/>
            <person name="Cardozo J."/>
            <person name="Chambergo F."/>
            <person name="Ciapina L.P."/>
            <person name="Cicarelli R.M.B."/>
            <person name="Coutinho L.L."/>
            <person name="Cursino-Santos J.R."/>
            <person name="El-Dorry H."/>
            <person name="Faria J.B."/>
            <person name="Ferreira A.J.S."/>
            <person name="Ferreira R.C.C."/>
            <person name="Ferro M.I.T."/>
            <person name="Formighieri E.F."/>
            <person name="Franco M.C."/>
            <person name="Greggio C.C."/>
            <person name="Gruber A."/>
            <person name="Katsuyama A.M."/>
            <person name="Kishi L.T."/>
            <person name="Leite R.P."/>
            <person name="Lemos E.G.M."/>
            <person name="Lemos M.V.F."/>
            <person name="Locali E.C."/>
            <person name="Machado M.A."/>
            <person name="Madeira A.M.B.N."/>
            <person name="Martinez-Rossi N.M."/>
            <person name="Martins E.C."/>
            <person name="Meidanis J."/>
            <person name="Menck C.F.M."/>
            <person name="Miyaki C.Y."/>
            <person name="Moon D.H."/>
            <person name="Moreira L.M."/>
            <person name="Novo M.T.M."/>
            <person name="Okura V.K."/>
            <person name="Oliveira M.C."/>
            <person name="Oliveira V.R."/>
            <person name="Pereira H.A."/>
            <person name="Rossi A."/>
            <person name="Sena J.A.D."/>
            <person name="Silva C."/>
            <person name="de Souza R.F."/>
            <person name="Spinola L.A.F."/>
            <person name="Takita M.A."/>
            <person name="Tamura R.E."/>
            <person name="Teixeira E.C."/>
            <person name="Tezza R.I.D."/>
            <person name="Trindade dos Santos M."/>
            <person name="Truffi D."/>
            <person name="Tsai S.M."/>
            <person name="White F.F."/>
            <person name="Setubal J.C."/>
            <person name="Kitajima J.P."/>
        </authorList>
    </citation>
    <scope>NUCLEOTIDE SEQUENCE [LARGE SCALE GENOMIC DNA]</scope>
    <source>
        <strain>ATCC 33913 / DSM 3586 / NCPPB 528 / LMG 568 / P 25</strain>
    </source>
</reference>
<evidence type="ECO:0000255" key="1">
    <source>
        <dbReference type="HAMAP-Rule" id="MF_00105"/>
    </source>
</evidence>
<keyword id="KW-0175">Coiled coil</keyword>
<keyword id="KW-0238">DNA-binding</keyword>
<keyword id="KW-1185">Reference proteome</keyword>
<keyword id="KW-0804">Transcription</keyword>
<keyword id="KW-0805">Transcription regulation</keyword>